<keyword id="KW-1064">Adaptive immunity</keyword>
<keyword id="KW-1003">Cell membrane</keyword>
<keyword id="KW-1015">Disulfide bond</keyword>
<keyword id="KW-0391">Immunity</keyword>
<keyword id="KW-0393">Immunoglobulin domain</keyword>
<keyword id="KW-0472">Membrane</keyword>
<keyword id="KW-1267">Proteomics identification</keyword>
<keyword id="KW-0675">Receptor</keyword>
<keyword id="KW-1185">Reference proteome</keyword>
<keyword id="KW-0732">Signal</keyword>
<keyword id="KW-1279">T cell receptor</keyword>
<organism>
    <name type="scientific">Homo sapiens</name>
    <name type="common">Human</name>
    <dbReference type="NCBI Taxonomy" id="9606"/>
    <lineage>
        <taxon>Eukaryota</taxon>
        <taxon>Metazoa</taxon>
        <taxon>Chordata</taxon>
        <taxon>Craniata</taxon>
        <taxon>Vertebrata</taxon>
        <taxon>Euteleostomi</taxon>
        <taxon>Mammalia</taxon>
        <taxon>Eutheria</taxon>
        <taxon>Euarchontoglires</taxon>
        <taxon>Primates</taxon>
        <taxon>Haplorrhini</taxon>
        <taxon>Catarrhini</taxon>
        <taxon>Hominidae</taxon>
        <taxon>Homo</taxon>
    </lineage>
</organism>
<sequence>MGTRLLFWVAFCLLGADHTGAGVSQSPSNKVTEKGKDVELRCDPISGHTALYWYRQSLGQGLEFLIYFQGNSAPDKSGLPSDRFSAERTGGSVSTLTIQRTQQEDSAVYLCASSL</sequence>
<protein>
    <recommendedName>
        <fullName evidence="8">T cell receptor beta variable 7-2</fullName>
    </recommendedName>
</protein>
<evidence type="ECO:0000255" key="1"/>
<evidence type="ECO:0000255" key="2">
    <source>
        <dbReference type="PROSITE-ProRule" id="PRU00114"/>
    </source>
</evidence>
<evidence type="ECO:0000303" key="3">
    <source>
    </source>
</evidence>
<evidence type="ECO:0000303" key="4">
    <source>
    </source>
</evidence>
<evidence type="ECO:0000303" key="5">
    <source>
    </source>
</evidence>
<evidence type="ECO:0000303" key="6">
    <source>
    </source>
</evidence>
<evidence type="ECO:0000303" key="7">
    <source>
    </source>
</evidence>
<evidence type="ECO:0000303" key="8">
    <source ref="2"/>
</evidence>
<evidence type="ECO:0000305" key="9"/>
<accession>A0A1B0GXF2</accession>
<proteinExistence type="evidence at protein level"/>
<gene>
    <name evidence="8" type="primary">TRBV7-2</name>
</gene>
<name>TVB72_HUMAN</name>
<reference key="1">
    <citation type="journal article" date="2003" name="Nature">
        <title>The DNA sequence of human chromosome 7.</title>
        <authorList>
            <person name="Hillier L.W."/>
            <person name="Fulton R.S."/>
            <person name="Fulton L.A."/>
            <person name="Graves T.A."/>
            <person name="Pepin K.H."/>
            <person name="Wagner-McPherson C."/>
            <person name="Layman D."/>
            <person name="Maas J."/>
            <person name="Jaeger S."/>
            <person name="Walker R."/>
            <person name="Wylie K."/>
            <person name="Sekhon M."/>
            <person name="Becker M.C."/>
            <person name="O'Laughlin M.D."/>
            <person name="Schaller M.E."/>
            <person name="Fewell G.A."/>
            <person name="Delehaunty K.D."/>
            <person name="Miner T.L."/>
            <person name="Nash W.E."/>
            <person name="Cordes M."/>
            <person name="Du H."/>
            <person name="Sun H."/>
            <person name="Edwards J."/>
            <person name="Bradshaw-Cordum H."/>
            <person name="Ali J."/>
            <person name="Andrews S."/>
            <person name="Isak A."/>
            <person name="Vanbrunt A."/>
            <person name="Nguyen C."/>
            <person name="Du F."/>
            <person name="Lamar B."/>
            <person name="Courtney L."/>
            <person name="Kalicki J."/>
            <person name="Ozersky P."/>
            <person name="Bielicki L."/>
            <person name="Scott K."/>
            <person name="Holmes A."/>
            <person name="Harkins R."/>
            <person name="Harris A."/>
            <person name="Strong C.M."/>
            <person name="Hou S."/>
            <person name="Tomlinson C."/>
            <person name="Dauphin-Kohlberg S."/>
            <person name="Kozlowicz-Reilly A."/>
            <person name="Leonard S."/>
            <person name="Rohlfing T."/>
            <person name="Rock S.M."/>
            <person name="Tin-Wollam A.-M."/>
            <person name="Abbott A."/>
            <person name="Minx P."/>
            <person name="Maupin R."/>
            <person name="Strowmatt C."/>
            <person name="Latreille P."/>
            <person name="Miller N."/>
            <person name="Johnson D."/>
            <person name="Murray J."/>
            <person name="Woessner J.P."/>
            <person name="Wendl M.C."/>
            <person name="Yang S.-P."/>
            <person name="Schultz B.R."/>
            <person name="Wallis J.W."/>
            <person name="Spieth J."/>
            <person name="Bieri T.A."/>
            <person name="Nelson J.O."/>
            <person name="Berkowicz N."/>
            <person name="Wohldmann P.E."/>
            <person name="Cook L.L."/>
            <person name="Hickenbotham M.T."/>
            <person name="Eldred J."/>
            <person name="Williams D."/>
            <person name="Bedell J.A."/>
            <person name="Mardis E.R."/>
            <person name="Clifton S.W."/>
            <person name="Chissoe S.L."/>
            <person name="Marra M.A."/>
            <person name="Raymond C."/>
            <person name="Haugen E."/>
            <person name="Gillett W."/>
            <person name="Zhou Y."/>
            <person name="James R."/>
            <person name="Phelps K."/>
            <person name="Iadanoto S."/>
            <person name="Bubb K."/>
            <person name="Simms E."/>
            <person name="Levy R."/>
            <person name="Clendenning J."/>
            <person name="Kaul R."/>
            <person name="Kent W.J."/>
            <person name="Furey T.S."/>
            <person name="Baertsch R.A."/>
            <person name="Brent M.R."/>
            <person name="Keibler E."/>
            <person name="Flicek P."/>
            <person name="Bork P."/>
            <person name="Suyama M."/>
            <person name="Bailey J.A."/>
            <person name="Portnoy M.E."/>
            <person name="Torrents D."/>
            <person name="Chinwalla A.T."/>
            <person name="Gish W.R."/>
            <person name="Eddy S.R."/>
            <person name="McPherson J.D."/>
            <person name="Olson M.V."/>
            <person name="Eichler E.E."/>
            <person name="Green E.D."/>
            <person name="Waterston R.H."/>
            <person name="Wilson R.K."/>
        </authorList>
    </citation>
    <scope>NUCLEOTIDE SEQUENCE [LARGE SCALE GENOMIC DNA] (IMGT ALLELE TRBV7-2*01)</scope>
</reference>
<reference key="2">
    <citation type="book" date="2001" name="The T Cell Receptor FactsBook.">
        <title>The T Cell Receptor FactsBook.</title>
        <editorList>
            <person name="Lefranc M.P."/>
            <person name="Lefranc G."/>
        </editorList>
        <authorList>
            <person name="Lefranc M.P."/>
            <person name="Lefranc G."/>
        </authorList>
    </citation>
    <scope>NOMENCLATURE</scope>
</reference>
<reference key="3">
    <citation type="journal article" date="2004" name="Nat. Rev. Immunol.">
        <title>The many important facets of T-cell repertoire diversity.</title>
        <authorList>
            <person name="Nikolich-Zugich J."/>
            <person name="Slifka M.K."/>
            <person name="Messaoudi I."/>
        </authorList>
    </citation>
    <scope>REVIEW ON T CELL REPERTOIRE DIVERSITY</scope>
</reference>
<reference key="4">
    <citation type="journal article" date="2010" name="Cold Spring Harb. Perspect. Biol.">
        <title>Structural biology of the T-cell receptor: insights into receptor assembly, ligand recognition, and initiation of signaling.</title>
        <authorList>
            <person name="Wucherpfennig K.W."/>
            <person name="Gagnon E."/>
            <person name="Call M.J."/>
            <person name="Huseby E.S."/>
            <person name="Call M.E."/>
        </authorList>
    </citation>
    <scope>REVIEW ON T CELL RECEPTOR-CD3 COMPLEX ASSEMBLY</scope>
    <scope>SUBCELLULAR LOCATION</scope>
</reference>
<reference key="5">
    <citation type="journal article" date="2013" name="Nat. Rev. Immunol.">
        <title>T cell receptor signalling networks: branched, diversified and bounded.</title>
        <authorList>
            <person name="Brownlie R.J."/>
            <person name="Zamoyska R."/>
        </authorList>
    </citation>
    <scope>REVIEW ON T CELL RECEPTOR SIGNALING</scope>
</reference>
<reference key="6">
    <citation type="journal article" date="2014" name="Front. Immunol.">
        <title>Immunoglobulin and T Cell Receptor Genes: IMGT((R)) and the Birth and Rise of Immunoinformatics.</title>
        <authorList>
            <person name="Lefranc M.P."/>
        </authorList>
    </citation>
    <scope>NOMENCLATURE</scope>
</reference>
<reference key="7">
    <citation type="journal article" date="2015" name="Annu. Rev. Immunol.">
        <title>T cell antigen receptor recognition of antigen-presenting molecules.</title>
        <authorList>
            <person name="Rossjohn J."/>
            <person name="Gras S."/>
            <person name="Miles J.J."/>
            <person name="Turner S.J."/>
            <person name="Godfrey D.I."/>
            <person name="McCluskey J."/>
        </authorList>
    </citation>
    <scope>REVIEW ON FUNCTION</scope>
</reference>
<dbReference type="EMBL" id="AC245088">
    <property type="status" value="NOT_ANNOTATED_CDS"/>
    <property type="molecule type" value="Genomic_DNA"/>
</dbReference>
<dbReference type="SMR" id="A0A1B0GXF2"/>
<dbReference type="FunCoup" id="A0A1B0GXF2">
    <property type="interactions" value="407"/>
</dbReference>
<dbReference type="IMGT_GENE-DB" id="TRBV7-2"/>
<dbReference type="BioMuta" id="ENSG00000282506"/>
<dbReference type="MassIVE" id="A0A1B0GXF2"/>
<dbReference type="Ensembl" id="ENST00000631392.1">
    <property type="protein sequence ID" value="ENSP00000488152.1"/>
    <property type="gene ID" value="ENSG00000282506.1"/>
</dbReference>
<dbReference type="Ensembl" id="ENST00000634605.1">
    <property type="protein sequence ID" value="ENSP00000489072.1"/>
    <property type="gene ID" value="ENSG00000282939.1"/>
</dbReference>
<dbReference type="AGR" id="HGNC:12236"/>
<dbReference type="GeneCards" id="TRBV7-2"/>
<dbReference type="HGNC" id="HGNC:12236">
    <property type="gene designation" value="TRBV7-2"/>
</dbReference>
<dbReference type="HPA" id="ENSG00000282939">
    <property type="expression patterns" value="Group enriched (epididymis, lymphoid tissue)"/>
</dbReference>
<dbReference type="neXtProt" id="NX_A0A1B0GXF2"/>
<dbReference type="VEuPathDB" id="HostDB:ENSG00000282939"/>
<dbReference type="GeneTree" id="ENSGT00940000154460"/>
<dbReference type="InParanoid" id="A0A1B0GXF2"/>
<dbReference type="OMA" id="WETSRFG"/>
<dbReference type="OrthoDB" id="9536814at2759"/>
<dbReference type="PAN-GO" id="A0A1B0GXF2">
    <property type="GO annotations" value="2 GO annotations based on evolutionary models"/>
</dbReference>
<dbReference type="ChiTaRS" id="TRBV7-2">
    <property type="organism name" value="human"/>
</dbReference>
<dbReference type="Pharos" id="A0A1B0GXF2">
    <property type="development level" value="Tdark"/>
</dbReference>
<dbReference type="PRO" id="PR:A0A1B0GXF2"/>
<dbReference type="Proteomes" id="UP000005640">
    <property type="component" value="Chromosome 7"/>
</dbReference>
<dbReference type="RNAct" id="A0A1B0GXF2">
    <property type="molecule type" value="protein"/>
</dbReference>
<dbReference type="Bgee" id="ENSG00000282939">
    <property type="expression patterns" value="Expressed in granulocyte and 83 other cell types or tissues"/>
</dbReference>
<dbReference type="GO" id="GO:0005886">
    <property type="term" value="C:plasma membrane"/>
    <property type="evidence" value="ECO:0000318"/>
    <property type="project" value="GO_Central"/>
</dbReference>
<dbReference type="GO" id="GO:0042101">
    <property type="term" value="C:T cell receptor complex"/>
    <property type="evidence" value="ECO:0007669"/>
    <property type="project" value="UniProtKB-KW"/>
</dbReference>
<dbReference type="GO" id="GO:0002250">
    <property type="term" value="P:adaptive immune response"/>
    <property type="evidence" value="ECO:0007669"/>
    <property type="project" value="UniProtKB-KW"/>
</dbReference>
<dbReference type="GO" id="GO:0007166">
    <property type="term" value="P:cell surface receptor signaling pathway"/>
    <property type="evidence" value="ECO:0000318"/>
    <property type="project" value="GO_Central"/>
</dbReference>
<dbReference type="CDD" id="cd05899">
    <property type="entry name" value="IgV_TCR_beta"/>
    <property type="match status" value="1"/>
</dbReference>
<dbReference type="FunFam" id="2.60.40.10:FF:002491">
    <property type="entry name" value="T cell receptor beta variable 12-4"/>
    <property type="match status" value="1"/>
</dbReference>
<dbReference type="Gene3D" id="2.60.40.10">
    <property type="entry name" value="Immunoglobulins"/>
    <property type="match status" value="1"/>
</dbReference>
<dbReference type="InterPro" id="IPR007110">
    <property type="entry name" value="Ig-like_dom"/>
</dbReference>
<dbReference type="InterPro" id="IPR036179">
    <property type="entry name" value="Ig-like_dom_sf"/>
</dbReference>
<dbReference type="InterPro" id="IPR013783">
    <property type="entry name" value="Ig-like_fold"/>
</dbReference>
<dbReference type="InterPro" id="IPR013106">
    <property type="entry name" value="Ig_V-set"/>
</dbReference>
<dbReference type="InterPro" id="IPR050413">
    <property type="entry name" value="TCR_beta_variable"/>
</dbReference>
<dbReference type="PANTHER" id="PTHR23268:SF108">
    <property type="entry name" value="T CELL RECEPTOR BETA VARIABLE 7-2-RELATED"/>
    <property type="match status" value="1"/>
</dbReference>
<dbReference type="PANTHER" id="PTHR23268">
    <property type="entry name" value="T-CELL RECEPTOR BETA CHAIN"/>
    <property type="match status" value="1"/>
</dbReference>
<dbReference type="Pfam" id="PF07686">
    <property type="entry name" value="V-set"/>
    <property type="match status" value="1"/>
</dbReference>
<dbReference type="SMART" id="SM00406">
    <property type="entry name" value="IGv"/>
    <property type="match status" value="1"/>
</dbReference>
<dbReference type="SUPFAM" id="SSF48726">
    <property type="entry name" value="Immunoglobulin"/>
    <property type="match status" value="1"/>
</dbReference>
<dbReference type="PROSITE" id="PS50835">
    <property type="entry name" value="IG_LIKE"/>
    <property type="match status" value="1"/>
</dbReference>
<feature type="signal peptide" evidence="1">
    <location>
        <begin position="1"/>
        <end position="21"/>
    </location>
</feature>
<feature type="chain" id="PRO_5014054640" description="T cell receptor beta variable 7-2" evidence="1">
    <location>
        <begin position="22"/>
        <end position="115"/>
    </location>
</feature>
<feature type="domain" description="Ig-like" evidence="2">
    <location>
        <begin position="22"/>
        <end position="115" status="greater than"/>
    </location>
</feature>
<feature type="disulfide bond" evidence="2">
    <location>
        <begin position="42"/>
        <end position="111"/>
    </location>
</feature>
<feature type="non-terminal residue">
    <location>
        <position position="115"/>
    </location>
</feature>
<comment type="function">
    <text evidence="3 5 6 7">V region of the variable domain of T cell receptor (TR) beta chain that participates in the antigen recognition (PubMed:24600447). Alpha-beta T cell receptors are antigen specific receptors which are essential to the immune response and are present on the cell surface of T lymphocytes. Recognize peptide-major histocompatibility (MH) (pMH) complexes that are displayed by antigen presenting cells (APC), a prerequisite for efficient T cell adaptive immunity against pathogens (PubMed:25493333). Binding of alpha-beta TR to pMH complex initiates TR-CD3 clustering on the cell surface and intracellular activation of LCK that phosphorylates the ITAM motifs of CD3G, CD3D, CD3E and CD247 enabling the recruitment of ZAP70. In turn ZAP70 phosphorylates LAT, which recruits numerous signaling molecules to form the LAT signalosome. The LAT signalosome propagates signal branching to three major signaling pathways, the calcium, the mitogen-activated protein kinase (MAPK) kinase and the nuclear factor NF-kappa-B (NF-kB) pathways, leading to the mobilization of transcription factors that are critical for gene expression and essential for T cell growth and differentiation (PubMed:23524462). The T cell repertoire is generated in the thymus, by V-(D)-J rearrangement. This repertoire is then shaped by intrathymic selection events to generate a peripheral T cell pool of self-MH restricted, non-autoaggressive T cells. Post-thymic interaction of alpha-beta TR with the pMH complexes shapes TR structural and functional avidity (PubMed:15040585).</text>
</comment>
<comment type="subunit">
    <text evidence="4">Alpha-beta TR is a heterodimer composed of an alpha and beta chain; disulfide-linked. The alpha-beta TR is associated with the transmembrane signaling CD3 coreceptor proteins to form the TR-CD3 (TcR or TCR). The assembly of alpha-beta TR heterodimers with CD3 occurs in the endoplasmic reticulum where a single alpha-beta TR heterodimer associates with one CD3D-CD3E heterodimer, one CD3G-CD3E heterodimer and one CD247 homodimer forming a stable octameric structure. CD3D-CD3E and CD3G-CD3E heterodimers preferentially associate with TR alpha and TR beta chains, respectively. The association of the CD247 homodimer is the last step of TcR assembly in the endoplasmic reticulum and is required for transport to the cell surface.</text>
</comment>
<comment type="subcellular location">
    <subcellularLocation>
        <location evidence="4">Cell membrane</location>
    </subcellularLocation>
</comment>
<comment type="polymorphism">
    <text evidence="9">There are several alleles. The sequence shown is that of IMGT allele TRBV7-2*01.</text>
</comment>